<accession>Q61521</accession>
<accession>Q7M0A8</accession>
<gene>
    <name type="primary">Ereg</name>
</gene>
<proteinExistence type="evidence at protein level"/>
<comment type="function">
    <text evidence="2 7">Ligand of the EGF receptor/EGFR and ERBB4. Stimulates EGFR and ERBB4 tyrosine phosphorylation (By similarity). Contributes to inflammation, wound healing, tissue repair, and oocyte maturation by regulating angiogenesis and vascular remodeling and by stimulating cell proliferation (PubMed:24631357).</text>
</comment>
<comment type="subunit">
    <text evidence="2">Interacts with EGFR and ERBB4.</text>
</comment>
<comment type="subcellular location">
    <molecule>Epiregulin</molecule>
    <subcellularLocation>
        <location evidence="2">Secreted</location>
        <location evidence="2">Extracellular space</location>
    </subcellularLocation>
</comment>
<comment type="subcellular location">
    <molecule>Proepiregulin</molecule>
    <subcellularLocation>
        <location evidence="2">Cell membrane</location>
        <topology evidence="2">Single-pass type I membrane protein</topology>
    </subcellularLocation>
</comment>
<comment type="developmental stage">
    <text evidence="6">Expressed in 7-day-old embryos with levels then falling to very low or undetectable amounts. Not detected in adult.</text>
</comment>
<feature type="signal peptide" evidence="3">
    <location>
        <begin position="1"/>
        <end position="22"/>
    </location>
</feature>
<feature type="chain" id="PRO_0000302801" description="Proepiregulin">
    <location>
        <begin position="23"/>
        <end position="162"/>
    </location>
</feature>
<feature type="propeptide" id="PRO_0000007559" evidence="5">
    <location>
        <begin position="23"/>
        <end position="55"/>
    </location>
</feature>
<feature type="chain" id="PRO_0000007560" description="Epiregulin">
    <location>
        <begin position="56"/>
        <end position="101"/>
    </location>
</feature>
<feature type="propeptide" id="PRO_0000007561" description="Removed in mature form" evidence="1">
    <location>
        <begin position="102"/>
        <end position="162"/>
    </location>
</feature>
<feature type="topological domain" description="Extracellular" evidence="3">
    <location>
        <begin position="53"/>
        <end position="112"/>
    </location>
</feature>
<feature type="transmembrane region" description="Helical" evidence="3">
    <location>
        <begin position="113"/>
        <end position="133"/>
    </location>
</feature>
<feature type="topological domain" description="Cytoplasmic" evidence="3">
    <location>
        <begin position="134"/>
        <end position="162"/>
    </location>
</feature>
<feature type="domain" description="EGF-like" evidence="4">
    <location>
        <begin position="57"/>
        <end position="97"/>
    </location>
</feature>
<feature type="glycosylation site" description="N-linked (GlcNAc...) asparagine" evidence="3">
    <location>
        <position position="40"/>
    </location>
</feature>
<feature type="disulfide bond" evidence="4">
    <location>
        <begin position="61"/>
        <end position="74"/>
    </location>
</feature>
<feature type="disulfide bond" evidence="4">
    <location>
        <begin position="69"/>
        <end position="85"/>
    </location>
</feature>
<feature type="disulfide bond" evidence="4">
    <location>
        <begin position="87"/>
        <end position="96"/>
    </location>
</feature>
<name>EREG_MOUSE</name>
<organism>
    <name type="scientific">Mus musculus</name>
    <name type="common">Mouse</name>
    <dbReference type="NCBI Taxonomy" id="10090"/>
    <lineage>
        <taxon>Eukaryota</taxon>
        <taxon>Metazoa</taxon>
        <taxon>Chordata</taxon>
        <taxon>Craniata</taxon>
        <taxon>Vertebrata</taxon>
        <taxon>Euteleostomi</taxon>
        <taxon>Mammalia</taxon>
        <taxon>Eutheria</taxon>
        <taxon>Euarchontoglires</taxon>
        <taxon>Glires</taxon>
        <taxon>Rodentia</taxon>
        <taxon>Myomorpha</taxon>
        <taxon>Muroidea</taxon>
        <taxon>Muridae</taxon>
        <taxon>Murinae</taxon>
        <taxon>Mus</taxon>
        <taxon>Mus</taxon>
    </lineage>
</organism>
<protein>
    <recommendedName>
        <fullName>Proepiregulin</fullName>
    </recommendedName>
    <component>
        <recommendedName>
            <fullName>Epiregulin</fullName>
            <shortName>EPR</shortName>
        </recommendedName>
    </component>
</protein>
<reference key="1">
    <citation type="journal article" date="1995" name="FEBS Lett.">
        <title>Molecular cloning of mouse epiregulin, a novel epidermal growth factor-related protein, expressed in the early stage of development.</title>
        <authorList>
            <person name="Toyoda H."/>
            <person name="Komurasaki T."/>
            <person name="Ikeda Y."/>
            <person name="Yoshimoto M."/>
            <person name="Morimoto S."/>
        </authorList>
    </citation>
    <scope>NUCLEOTIDE SEQUENCE [MRNA]</scope>
    <scope>DEVELOPMENTAL STAGE</scope>
    <source>
        <strain>NIH Swiss</strain>
        <tissue>Fibroblast</tissue>
    </source>
</reference>
<reference key="2">
    <citation type="journal article" date="2004" name="Genome Res.">
        <title>The status, quality, and expansion of the NIH full-length cDNA project: the Mammalian Gene Collection (MGC).</title>
        <authorList>
            <consortium name="The MGC Project Team"/>
        </authorList>
    </citation>
    <scope>NUCLEOTIDE SEQUENCE [LARGE SCALE MRNA]</scope>
</reference>
<reference key="3">
    <citation type="journal article" date="1995" name="J. Biol. Chem.">
        <title>Epiregulin, a novel epidermal growth factor with mitogenic activity for rat primary hepatocytes.</title>
        <authorList>
            <person name="Toyoda H."/>
            <person name="Komurasaki T."/>
            <person name="Uchida D."/>
            <person name="Takayama Y."/>
            <person name="Isobe T."/>
            <person name="Okuyama T."/>
            <person name="Hanada K."/>
        </authorList>
    </citation>
    <scope>PROTEIN SEQUENCE OF 56-101</scope>
</reference>
<reference key="4">
    <citation type="journal article" date="2014" name="Semin. Cell Dev. Biol.">
        <title>Epiregulin: roles in normal physiology and cancer.</title>
        <authorList>
            <person name="Riese D.J. II"/>
            <person name="Cullum R.L."/>
        </authorList>
    </citation>
    <scope>REVIEW</scope>
</reference>
<dbReference type="EMBL" id="D30782">
    <property type="protein sequence ID" value="BAA06446.1"/>
    <property type="molecule type" value="mRNA"/>
</dbReference>
<dbReference type="EMBL" id="BC027838">
    <property type="protein sequence ID" value="AAH27838.1"/>
    <property type="molecule type" value="mRNA"/>
</dbReference>
<dbReference type="CCDS" id="CCDS19420.1"/>
<dbReference type="PIR" id="JT0747">
    <property type="entry name" value="JT0747"/>
</dbReference>
<dbReference type="PIR" id="S68401">
    <property type="entry name" value="S68401"/>
</dbReference>
<dbReference type="RefSeq" id="NP_031976.1">
    <property type="nucleotide sequence ID" value="NM_007950.2"/>
</dbReference>
<dbReference type="SMR" id="Q61521"/>
<dbReference type="FunCoup" id="Q61521">
    <property type="interactions" value="1042"/>
</dbReference>
<dbReference type="STRING" id="10090.ENSMUSP00000031324"/>
<dbReference type="GlyCosmos" id="Q61521">
    <property type="glycosylation" value="1 site, No reported glycans"/>
</dbReference>
<dbReference type="GlyGen" id="Q61521">
    <property type="glycosylation" value="2 sites"/>
</dbReference>
<dbReference type="PhosphoSitePlus" id="Q61521"/>
<dbReference type="PaxDb" id="10090-ENSMUSP00000031324"/>
<dbReference type="ProteomicsDB" id="275674"/>
<dbReference type="ABCD" id="Q61521">
    <property type="antibodies" value="5 sequenced antibodies"/>
</dbReference>
<dbReference type="Antibodypedia" id="24625">
    <property type="antibodies" value="313 antibodies from 33 providers"/>
</dbReference>
<dbReference type="Ensembl" id="ENSMUST00000031324.6">
    <property type="protein sequence ID" value="ENSMUSP00000031324.5"/>
    <property type="gene ID" value="ENSMUSG00000029377.6"/>
</dbReference>
<dbReference type="GeneID" id="13874"/>
<dbReference type="KEGG" id="mmu:13874"/>
<dbReference type="UCSC" id="uc008ybs.1">
    <property type="organism name" value="mouse"/>
</dbReference>
<dbReference type="AGR" id="MGI:107508"/>
<dbReference type="CTD" id="2069"/>
<dbReference type="MGI" id="MGI:107508">
    <property type="gene designation" value="Ereg"/>
</dbReference>
<dbReference type="VEuPathDB" id="HostDB:ENSMUSG00000029377"/>
<dbReference type="eggNOG" id="ENOG502S5DM">
    <property type="taxonomic scope" value="Eukaryota"/>
</dbReference>
<dbReference type="GeneTree" id="ENSGT00510000048748"/>
<dbReference type="HOGENOM" id="CLU_138015_0_0_1"/>
<dbReference type="InParanoid" id="Q61521"/>
<dbReference type="OMA" id="CKWYKKN"/>
<dbReference type="OrthoDB" id="6133584at2759"/>
<dbReference type="PhylomeDB" id="Q61521"/>
<dbReference type="TreeFam" id="TF336145"/>
<dbReference type="Reactome" id="R-MMU-1227986">
    <property type="pathway name" value="Signaling by ERBB2"/>
</dbReference>
<dbReference type="Reactome" id="R-MMU-1236394">
    <property type="pathway name" value="Signaling by ERBB4"/>
</dbReference>
<dbReference type="Reactome" id="R-MMU-1250196">
    <property type="pathway name" value="SHC1 events in ERBB2 signaling"/>
</dbReference>
<dbReference type="Reactome" id="R-MMU-1250342">
    <property type="pathway name" value="PI3K events in ERBB4 signaling"/>
</dbReference>
<dbReference type="Reactome" id="R-MMU-1250347">
    <property type="pathway name" value="SHC1 events in ERBB4 signaling"/>
</dbReference>
<dbReference type="Reactome" id="R-MMU-1257604">
    <property type="pathway name" value="PIP3 activates AKT signaling"/>
</dbReference>
<dbReference type="Reactome" id="R-MMU-177929">
    <property type="pathway name" value="Signaling by EGFR"/>
</dbReference>
<dbReference type="Reactome" id="R-MMU-179812">
    <property type="pathway name" value="GRB2 events in EGFR signaling"/>
</dbReference>
<dbReference type="Reactome" id="R-MMU-180292">
    <property type="pathway name" value="GAB1 signalosome"/>
</dbReference>
<dbReference type="Reactome" id="R-MMU-180336">
    <property type="pathway name" value="SHC1 events in EGFR signaling"/>
</dbReference>
<dbReference type="Reactome" id="R-MMU-182971">
    <property type="pathway name" value="EGFR downregulation"/>
</dbReference>
<dbReference type="Reactome" id="R-MMU-1963640">
    <property type="pathway name" value="GRB2 events in ERBB2 signaling"/>
</dbReference>
<dbReference type="Reactome" id="R-MMU-1963642">
    <property type="pathway name" value="PI3K events in ERBB2 signaling"/>
</dbReference>
<dbReference type="Reactome" id="R-MMU-212718">
    <property type="pathway name" value="EGFR interacts with phospholipase C-gamma"/>
</dbReference>
<dbReference type="Reactome" id="R-MMU-5673001">
    <property type="pathway name" value="RAF/MAP kinase cascade"/>
</dbReference>
<dbReference type="Reactome" id="R-MMU-6785631">
    <property type="pathway name" value="ERBB2 Regulates Cell Motility"/>
</dbReference>
<dbReference type="Reactome" id="R-MMU-6811558">
    <property type="pathway name" value="PI5P, PP2A and IER3 Regulate PI3K/AKT Signaling"/>
</dbReference>
<dbReference type="Reactome" id="R-MMU-8847993">
    <property type="pathway name" value="ERBB2 Activates PTK6 Signaling"/>
</dbReference>
<dbReference type="Reactome" id="R-MMU-8856825">
    <property type="pathway name" value="Cargo recognition for clathrin-mediated endocytosis"/>
</dbReference>
<dbReference type="Reactome" id="R-MMU-8856828">
    <property type="pathway name" value="Clathrin-mediated endocytosis"/>
</dbReference>
<dbReference type="Reactome" id="R-MMU-8863795">
    <property type="pathway name" value="Downregulation of ERBB2 signaling"/>
</dbReference>
<dbReference type="Reactome" id="R-MMU-9009391">
    <property type="pathway name" value="Extra-nuclear estrogen signaling"/>
</dbReference>
<dbReference type="BioGRID-ORCS" id="13874">
    <property type="hits" value="1 hit in 80 CRISPR screens"/>
</dbReference>
<dbReference type="PRO" id="PR:Q61521"/>
<dbReference type="Proteomes" id="UP000000589">
    <property type="component" value="Chromosome 5"/>
</dbReference>
<dbReference type="RNAct" id="Q61521">
    <property type="molecule type" value="protein"/>
</dbReference>
<dbReference type="Bgee" id="ENSMUSG00000029377">
    <property type="expression patterns" value="Expressed in indifferent gonad and 54 other cell types or tissues"/>
</dbReference>
<dbReference type="GO" id="GO:0005615">
    <property type="term" value="C:extracellular space"/>
    <property type="evidence" value="ECO:0000314"/>
    <property type="project" value="UniProtKB"/>
</dbReference>
<dbReference type="GO" id="GO:0005886">
    <property type="term" value="C:plasma membrane"/>
    <property type="evidence" value="ECO:0007669"/>
    <property type="project" value="UniProtKB-SubCell"/>
</dbReference>
<dbReference type="GO" id="GO:0005154">
    <property type="term" value="F:epidermal growth factor receptor binding"/>
    <property type="evidence" value="ECO:0000314"/>
    <property type="project" value="UniProtKB"/>
</dbReference>
<dbReference type="GO" id="GO:0008083">
    <property type="term" value="F:growth factor activity"/>
    <property type="evidence" value="ECO:0007669"/>
    <property type="project" value="UniProtKB-KW"/>
</dbReference>
<dbReference type="GO" id="GO:0048018">
    <property type="term" value="F:receptor ligand activity"/>
    <property type="evidence" value="ECO:0000314"/>
    <property type="project" value="MGI"/>
</dbReference>
<dbReference type="GO" id="GO:0030297">
    <property type="term" value="F:transmembrane receptor protein tyrosine kinase activator activity"/>
    <property type="evidence" value="ECO:0000314"/>
    <property type="project" value="MGI"/>
</dbReference>
<dbReference type="GO" id="GO:0009653">
    <property type="term" value="P:anatomical structure morphogenesis"/>
    <property type="evidence" value="ECO:0000304"/>
    <property type="project" value="UniProtKB"/>
</dbReference>
<dbReference type="GO" id="GO:0001525">
    <property type="term" value="P:angiogenesis"/>
    <property type="evidence" value="ECO:0007669"/>
    <property type="project" value="UniProtKB-KW"/>
</dbReference>
<dbReference type="GO" id="GO:0009887">
    <property type="term" value="P:animal organ morphogenesis"/>
    <property type="evidence" value="ECO:0000304"/>
    <property type="project" value="UniProtKB"/>
</dbReference>
<dbReference type="GO" id="GO:0007267">
    <property type="term" value="P:cell-cell signaling"/>
    <property type="evidence" value="ECO:0000250"/>
    <property type="project" value="UniProtKB"/>
</dbReference>
<dbReference type="GO" id="GO:0019221">
    <property type="term" value="P:cytokine-mediated signaling pathway"/>
    <property type="evidence" value="ECO:0000250"/>
    <property type="project" value="UniProtKB"/>
</dbReference>
<dbReference type="GO" id="GO:0007173">
    <property type="term" value="P:epidermal growth factor receptor signaling pathway"/>
    <property type="evidence" value="ECO:0000314"/>
    <property type="project" value="UniProtKB"/>
</dbReference>
<dbReference type="GO" id="GO:0038134">
    <property type="term" value="P:ERBB2-EGFR signaling pathway"/>
    <property type="evidence" value="ECO:0000266"/>
    <property type="project" value="MGI"/>
</dbReference>
<dbReference type="GO" id="GO:0038135">
    <property type="term" value="P:ERBB2-ERBB4 signaling pathway"/>
    <property type="evidence" value="ECO:0000266"/>
    <property type="project" value="MGI"/>
</dbReference>
<dbReference type="GO" id="GO:0038138">
    <property type="term" value="P:ERBB4-ERBB4 signaling pathway"/>
    <property type="evidence" value="ECO:0000266"/>
    <property type="project" value="MGI"/>
</dbReference>
<dbReference type="GO" id="GO:0007143">
    <property type="term" value="P:female meiotic nuclear division"/>
    <property type="evidence" value="ECO:0000250"/>
    <property type="project" value="UniProtKB"/>
</dbReference>
<dbReference type="GO" id="GO:0043616">
    <property type="term" value="P:keratinocyte proliferation"/>
    <property type="evidence" value="ECO:0000250"/>
    <property type="project" value="UniProtKB"/>
</dbReference>
<dbReference type="GO" id="GO:0042700">
    <property type="term" value="P:luteinizing hormone signaling pathway"/>
    <property type="evidence" value="ECO:0000250"/>
    <property type="project" value="UniProtKB"/>
</dbReference>
<dbReference type="GO" id="GO:0009299">
    <property type="term" value="P:mRNA transcription"/>
    <property type="evidence" value="ECO:0000250"/>
    <property type="project" value="UniProtKB"/>
</dbReference>
<dbReference type="GO" id="GO:0008285">
    <property type="term" value="P:negative regulation of cell population proliferation"/>
    <property type="evidence" value="ECO:0000314"/>
    <property type="project" value="UniProtKB"/>
</dbReference>
<dbReference type="GO" id="GO:0045892">
    <property type="term" value="P:negative regulation of DNA-templated transcription"/>
    <property type="evidence" value="ECO:0000250"/>
    <property type="project" value="UniProtKB"/>
</dbReference>
<dbReference type="GO" id="GO:0051151">
    <property type="term" value="P:negative regulation of smooth muscle cell differentiation"/>
    <property type="evidence" value="ECO:0000250"/>
    <property type="project" value="UniProtKB"/>
</dbReference>
<dbReference type="GO" id="GO:0001556">
    <property type="term" value="P:oocyte maturation"/>
    <property type="evidence" value="ECO:0000250"/>
    <property type="project" value="UniProtKB"/>
</dbReference>
<dbReference type="GO" id="GO:0001550">
    <property type="term" value="P:ovarian cumulus expansion"/>
    <property type="evidence" value="ECO:0000250"/>
    <property type="project" value="UniProtKB"/>
</dbReference>
<dbReference type="GO" id="GO:0030728">
    <property type="term" value="P:ovulation"/>
    <property type="evidence" value="ECO:0000250"/>
    <property type="project" value="UniProtKB"/>
</dbReference>
<dbReference type="GO" id="GO:0051781">
    <property type="term" value="P:positive regulation of cell division"/>
    <property type="evidence" value="ECO:0007669"/>
    <property type="project" value="UniProtKB-KW"/>
</dbReference>
<dbReference type="GO" id="GO:0008284">
    <property type="term" value="P:positive regulation of cell population proliferation"/>
    <property type="evidence" value="ECO:0000314"/>
    <property type="project" value="UniProtKB"/>
</dbReference>
<dbReference type="GO" id="GO:0001819">
    <property type="term" value="P:positive regulation of cytokine production"/>
    <property type="evidence" value="ECO:0000315"/>
    <property type="project" value="UniProtKB"/>
</dbReference>
<dbReference type="GO" id="GO:0045740">
    <property type="term" value="P:positive regulation of DNA replication"/>
    <property type="evidence" value="ECO:0000314"/>
    <property type="project" value="UniProtKB"/>
</dbReference>
<dbReference type="GO" id="GO:0048146">
    <property type="term" value="P:positive regulation of fibroblast proliferation"/>
    <property type="evidence" value="ECO:0000250"/>
    <property type="project" value="UniProtKB"/>
</dbReference>
<dbReference type="GO" id="GO:0045089">
    <property type="term" value="P:positive regulation of innate immune response"/>
    <property type="evidence" value="ECO:0000315"/>
    <property type="project" value="UniProtKB"/>
</dbReference>
<dbReference type="GO" id="GO:0032755">
    <property type="term" value="P:positive regulation of interleukin-6 production"/>
    <property type="evidence" value="ECO:0000315"/>
    <property type="project" value="UniProtKB"/>
</dbReference>
<dbReference type="GO" id="GO:0045840">
    <property type="term" value="P:positive regulation of mitotic nuclear division"/>
    <property type="evidence" value="ECO:0000314"/>
    <property type="project" value="UniProtKB"/>
</dbReference>
<dbReference type="GO" id="GO:0042327">
    <property type="term" value="P:positive regulation of phosphorylation"/>
    <property type="evidence" value="ECO:0000250"/>
    <property type="project" value="UniProtKB"/>
</dbReference>
<dbReference type="GO" id="GO:0045860">
    <property type="term" value="P:positive regulation of protein kinase activity"/>
    <property type="evidence" value="ECO:0000250"/>
    <property type="project" value="UniProtKB"/>
</dbReference>
<dbReference type="GO" id="GO:0048661">
    <property type="term" value="P:positive regulation of smooth muscle cell proliferation"/>
    <property type="evidence" value="ECO:0000250"/>
    <property type="project" value="UniProtKB"/>
</dbReference>
<dbReference type="GO" id="GO:0048160">
    <property type="term" value="P:primary follicle stage"/>
    <property type="evidence" value="ECO:0000250"/>
    <property type="project" value="UniProtKB"/>
</dbReference>
<dbReference type="GO" id="GO:0043434">
    <property type="term" value="P:response to peptide hormone"/>
    <property type="evidence" value="ECO:0007669"/>
    <property type="project" value="Ensembl"/>
</dbReference>
<dbReference type="FunFam" id="2.10.25.10:FF:000320">
    <property type="entry name" value="Proepiregulin"/>
    <property type="match status" value="1"/>
</dbReference>
<dbReference type="Gene3D" id="2.10.25.10">
    <property type="entry name" value="Laminin"/>
    <property type="match status" value="1"/>
</dbReference>
<dbReference type="InterPro" id="IPR000742">
    <property type="entry name" value="EGF-like_dom"/>
</dbReference>
<dbReference type="PANTHER" id="PTHR10740:SF11">
    <property type="entry name" value="PROEPIREGULIN"/>
    <property type="match status" value="1"/>
</dbReference>
<dbReference type="PANTHER" id="PTHR10740">
    <property type="entry name" value="TRANSFORMING GROWTH FACTOR ALPHA"/>
    <property type="match status" value="1"/>
</dbReference>
<dbReference type="PRINTS" id="PR00009">
    <property type="entry name" value="EGFTGF"/>
</dbReference>
<dbReference type="SUPFAM" id="SSF57196">
    <property type="entry name" value="EGF/Laminin"/>
    <property type="match status" value="1"/>
</dbReference>
<dbReference type="PROSITE" id="PS00022">
    <property type="entry name" value="EGF_1"/>
    <property type="match status" value="1"/>
</dbReference>
<dbReference type="PROSITE" id="PS01186">
    <property type="entry name" value="EGF_2"/>
    <property type="match status" value="1"/>
</dbReference>
<dbReference type="PROSITE" id="PS50026">
    <property type="entry name" value="EGF_3"/>
    <property type="match status" value="1"/>
</dbReference>
<sequence length="162" mass="18474">METLPASWVLTLLCLGSHLLQAVISTTVIPSCIPGESEDNCTALVQMEDDPRVAQVQITKCSSDMDGYCLHGQCIYLVDMREKFCRCEVGYTGLRCEHFFLTVHQPLSKEYVALTVILIFLFLIITAGCIYYFCRWYKNRKSKKSREEYERVTSGDPVLPQV</sequence>
<evidence type="ECO:0000250" key="1"/>
<evidence type="ECO:0000250" key="2">
    <source>
        <dbReference type="UniProtKB" id="O14944"/>
    </source>
</evidence>
<evidence type="ECO:0000255" key="3"/>
<evidence type="ECO:0000255" key="4">
    <source>
        <dbReference type="PROSITE-ProRule" id="PRU00076"/>
    </source>
</evidence>
<evidence type="ECO:0000269" key="5">
    <source>
    </source>
</evidence>
<evidence type="ECO:0000269" key="6">
    <source>
    </source>
</evidence>
<evidence type="ECO:0000303" key="7">
    <source>
    </source>
</evidence>
<keyword id="KW-0037">Angiogenesis</keyword>
<keyword id="KW-1003">Cell membrane</keyword>
<keyword id="KW-0217">Developmental protein</keyword>
<keyword id="KW-0221">Differentiation</keyword>
<keyword id="KW-0903">Direct protein sequencing</keyword>
<keyword id="KW-1015">Disulfide bond</keyword>
<keyword id="KW-0245">EGF-like domain</keyword>
<keyword id="KW-0325">Glycoprotein</keyword>
<keyword id="KW-0339">Growth factor</keyword>
<keyword id="KW-0472">Membrane</keyword>
<keyword id="KW-0497">Mitogen</keyword>
<keyword id="KW-1185">Reference proteome</keyword>
<keyword id="KW-0964">Secreted</keyword>
<keyword id="KW-0732">Signal</keyword>
<keyword id="KW-0812">Transmembrane</keyword>
<keyword id="KW-1133">Transmembrane helix</keyword>